<accession>A6THU5</accession>
<organism>
    <name type="scientific">Klebsiella pneumoniae subsp. pneumoniae (strain ATCC 700721 / MGH 78578)</name>
    <dbReference type="NCBI Taxonomy" id="272620"/>
    <lineage>
        <taxon>Bacteria</taxon>
        <taxon>Pseudomonadati</taxon>
        <taxon>Pseudomonadota</taxon>
        <taxon>Gammaproteobacteria</taxon>
        <taxon>Enterobacterales</taxon>
        <taxon>Enterobacteriaceae</taxon>
        <taxon>Klebsiella/Raoultella group</taxon>
        <taxon>Klebsiella</taxon>
        <taxon>Klebsiella pneumoniae complex</taxon>
    </lineage>
</organism>
<protein>
    <recommendedName>
        <fullName evidence="1">4-hydroxy-2-oxo-heptane-1,7-dioate aldolase</fullName>
        <ecNumber evidence="1">4.1.2.52</ecNumber>
    </recommendedName>
    <alternativeName>
        <fullName evidence="1">2,4-dihydroxyhept-2-ene-1,7-dioic acid aldolase</fullName>
        <shortName evidence="1">HHED aldolase</shortName>
    </alternativeName>
    <alternativeName>
        <fullName evidence="1">4-hydroxy-2-ketoheptane-1,7-dioate aldolase</fullName>
        <shortName evidence="1">HKHD aldolase</shortName>
    </alternativeName>
</protein>
<proteinExistence type="inferred from homology"/>
<dbReference type="EC" id="4.1.2.52" evidence="1"/>
<dbReference type="EMBL" id="CP000647">
    <property type="protein sequence ID" value="ABR80129.1"/>
    <property type="molecule type" value="Genomic_DNA"/>
</dbReference>
<dbReference type="RefSeq" id="WP_015959374.1">
    <property type="nucleotide sequence ID" value="NC_009648.1"/>
</dbReference>
<dbReference type="SMR" id="A6THU5"/>
<dbReference type="STRING" id="272620.KPN_04783"/>
<dbReference type="PaxDb" id="272620-KPN_04783"/>
<dbReference type="EnsemblBacteria" id="ABR80129">
    <property type="protein sequence ID" value="ABR80129"/>
    <property type="gene ID" value="KPN_04783"/>
</dbReference>
<dbReference type="KEGG" id="kpn:KPN_04783"/>
<dbReference type="HOGENOM" id="CLU_059964_1_0_6"/>
<dbReference type="UniPathway" id="UPA00208">
    <property type="reaction ID" value="UER00422"/>
</dbReference>
<dbReference type="Proteomes" id="UP000000265">
    <property type="component" value="Chromosome"/>
</dbReference>
<dbReference type="GO" id="GO:0005737">
    <property type="term" value="C:cytoplasm"/>
    <property type="evidence" value="ECO:0007669"/>
    <property type="project" value="TreeGrafter"/>
</dbReference>
<dbReference type="GO" id="GO:0043863">
    <property type="term" value="F:4-hydroxy-2-ketopimelate aldolase activity"/>
    <property type="evidence" value="ECO:0007669"/>
    <property type="project" value="RHEA"/>
</dbReference>
<dbReference type="GO" id="GO:0046872">
    <property type="term" value="F:metal ion binding"/>
    <property type="evidence" value="ECO:0007669"/>
    <property type="project" value="UniProtKB-UniRule"/>
</dbReference>
<dbReference type="GO" id="GO:1901023">
    <property type="term" value="P:4-hydroxyphenylacetate catabolic process"/>
    <property type="evidence" value="ECO:0007669"/>
    <property type="project" value="UniProtKB-UniRule"/>
</dbReference>
<dbReference type="GO" id="GO:0010124">
    <property type="term" value="P:phenylacetate catabolic process"/>
    <property type="evidence" value="ECO:0007669"/>
    <property type="project" value="InterPro"/>
</dbReference>
<dbReference type="FunFam" id="3.20.20.60:FF:000004">
    <property type="entry name" value="5-keto-4-deoxy-D-glucarate aldolase"/>
    <property type="match status" value="1"/>
</dbReference>
<dbReference type="Gene3D" id="3.20.20.60">
    <property type="entry name" value="Phosphoenolpyruvate-binding domains"/>
    <property type="match status" value="1"/>
</dbReference>
<dbReference type="HAMAP" id="MF_01292">
    <property type="entry name" value="HKHD_aldolase"/>
    <property type="match status" value="1"/>
</dbReference>
<dbReference type="InterPro" id="IPR005000">
    <property type="entry name" value="Aldolase/citrate-lyase_domain"/>
</dbReference>
<dbReference type="InterPro" id="IPR023701">
    <property type="entry name" value="HKHD_aldolase_ent"/>
</dbReference>
<dbReference type="InterPro" id="IPR012689">
    <property type="entry name" value="HpaI"/>
</dbReference>
<dbReference type="InterPro" id="IPR050251">
    <property type="entry name" value="HpcH-HpaI_aldolase"/>
</dbReference>
<dbReference type="InterPro" id="IPR015813">
    <property type="entry name" value="Pyrv/PenolPyrv_kinase-like_dom"/>
</dbReference>
<dbReference type="InterPro" id="IPR040442">
    <property type="entry name" value="Pyrv_kinase-like_dom_sf"/>
</dbReference>
<dbReference type="NCBIfam" id="TIGR02311">
    <property type="entry name" value="HpaI"/>
    <property type="match status" value="1"/>
</dbReference>
<dbReference type="PANTHER" id="PTHR30502">
    <property type="entry name" value="2-KETO-3-DEOXY-L-RHAMNONATE ALDOLASE"/>
    <property type="match status" value="1"/>
</dbReference>
<dbReference type="PANTHER" id="PTHR30502:SF0">
    <property type="entry name" value="PHOSPHOENOLPYRUVATE CARBOXYLASE FAMILY PROTEIN"/>
    <property type="match status" value="1"/>
</dbReference>
<dbReference type="Pfam" id="PF03328">
    <property type="entry name" value="HpcH_HpaI"/>
    <property type="match status" value="1"/>
</dbReference>
<dbReference type="SUPFAM" id="SSF51621">
    <property type="entry name" value="Phosphoenolpyruvate/pyruvate domain"/>
    <property type="match status" value="1"/>
</dbReference>
<evidence type="ECO:0000255" key="1">
    <source>
        <dbReference type="HAMAP-Rule" id="MF_01292"/>
    </source>
</evidence>
<feature type="chain" id="PRO_0000355105" description="4-hydroxy-2-oxo-heptane-1,7-dioate aldolase">
    <location>
        <begin position="1"/>
        <end position="265"/>
    </location>
</feature>
<feature type="active site" description="Proton acceptor" evidence="1">
    <location>
        <position position="45"/>
    </location>
</feature>
<feature type="binding site" evidence="1">
    <location>
        <position position="147"/>
    </location>
    <ligand>
        <name>substrate</name>
    </ligand>
</feature>
<feature type="binding site" evidence="1">
    <location>
        <position position="149"/>
    </location>
    <ligand>
        <name>a divalent metal cation</name>
        <dbReference type="ChEBI" id="CHEBI:60240"/>
    </ligand>
</feature>
<feature type="binding site" evidence="1">
    <location>
        <position position="174"/>
    </location>
    <ligand>
        <name>substrate</name>
    </ligand>
</feature>
<feature type="binding site" evidence="1">
    <location>
        <position position="175"/>
    </location>
    <ligand>
        <name>a divalent metal cation</name>
        <dbReference type="ChEBI" id="CHEBI:60240"/>
    </ligand>
</feature>
<feature type="binding site" evidence="1">
    <location>
        <position position="175"/>
    </location>
    <ligand>
        <name>substrate</name>
    </ligand>
</feature>
<feature type="site" description="Transition state stabilizer" evidence="1">
    <location>
        <position position="70"/>
    </location>
</feature>
<feature type="site" description="Increases basicity of active site His" evidence="1">
    <location>
        <position position="84"/>
    </location>
</feature>
<reference key="1">
    <citation type="submission" date="2006-09" db="EMBL/GenBank/DDBJ databases">
        <authorList>
            <consortium name="The Klebsiella pneumonia Genome Sequencing Project"/>
            <person name="McClelland M."/>
            <person name="Sanderson E.K."/>
            <person name="Spieth J."/>
            <person name="Clifton W.S."/>
            <person name="Latreille P."/>
            <person name="Sabo A."/>
            <person name="Pepin K."/>
            <person name="Bhonagiri V."/>
            <person name="Porwollik S."/>
            <person name="Ali J."/>
            <person name="Wilson R.K."/>
        </authorList>
    </citation>
    <scope>NUCLEOTIDE SEQUENCE [LARGE SCALE GENOMIC DNA]</scope>
    <source>
        <strain>ATCC 700721 / MGH 78578</strain>
    </source>
</reference>
<sequence>MNNAFKDALKAGRPQIGLWLGLCSSYSAELLAGAGFDWLLIDGEHAPNNVPTVLTQLQAIAPYPSQPVVRPSWNDPVQIKQLLDVGAQTLLVPMVQNAEEARLAVRATRYPPAGIRGVGSALARASRWNRVPDYIHQANDAMCVLVQIETREALKNLPQILDVDGVDGVFIGPADLSADMGHGGNPQHPEVQAAIEDAIQQIRQAGKAPGILMANEQLAKRYLELGALFVAVGVDTTLLARGAEALAARFTHNATTTTDNNKSVY</sequence>
<name>HPCH_KLEP7</name>
<gene>
    <name evidence="1" type="primary">hpcH</name>
    <name evidence="1" type="synonym">hpaI</name>
    <name type="ordered locus">KPN78578_47050</name>
    <name type="ORF">KPN_04783</name>
</gene>
<keyword id="KW-0058">Aromatic hydrocarbons catabolism</keyword>
<keyword id="KW-0456">Lyase</keyword>
<keyword id="KW-0479">Metal-binding</keyword>
<comment type="function">
    <text evidence="1">Catalyzes the reversible retro-aldol cleavage of 4-hydroxy-2-ketoheptane-1,7-dioate (HKHD) to pyruvate and succinic semialdehyde.</text>
</comment>
<comment type="catalytic activity">
    <reaction evidence="1">
        <text>4-hydroxy-2-oxoheptanedioate = succinate semialdehyde + pyruvate</text>
        <dbReference type="Rhea" id="RHEA:25788"/>
        <dbReference type="ChEBI" id="CHEBI:15361"/>
        <dbReference type="ChEBI" id="CHEBI:57706"/>
        <dbReference type="ChEBI" id="CHEBI:73036"/>
        <dbReference type="EC" id="4.1.2.52"/>
    </reaction>
</comment>
<comment type="cofactor">
    <cofactor evidence="1">
        <name>a divalent metal cation</name>
        <dbReference type="ChEBI" id="CHEBI:60240"/>
    </cofactor>
    <text evidence="1">Binds 1 divalent metal cation per subunit.</text>
</comment>
<comment type="pathway">
    <text evidence="1">Aromatic compound metabolism; 4-hydroxyphenylacetate degradation; pyruvate and succinate semialdehyde from 4-hydroxyphenylacetate: step 7/7.</text>
</comment>
<comment type="subunit">
    <text evidence="1">Homohexamer; trimer of dimers.</text>
</comment>
<comment type="similarity">
    <text evidence="1">Belongs to the HpcH/HpaI aldolase family.</text>
</comment>